<dbReference type="EMBL" id="J02459">
    <property type="protein sequence ID" value="AAA96573.1"/>
    <property type="molecule type" value="Genomic_DNA"/>
</dbReference>
<dbReference type="EMBL" id="M17427">
    <property type="protein sequence ID" value="AAA32244.1"/>
    <property type="molecule type" value="mRNA"/>
</dbReference>
<dbReference type="PIR" id="C94614">
    <property type="entry name" value="QCBP3L"/>
</dbReference>
<dbReference type="RefSeq" id="NP_040620.1">
    <property type="nucleotide sequence ID" value="NC_001416.1"/>
</dbReference>
<dbReference type="SMR" id="P03044"/>
<dbReference type="MEROPS" id="I75.001"/>
<dbReference type="GeneID" id="2703542"/>
<dbReference type="KEGG" id="vg:3827056"/>
<dbReference type="Proteomes" id="UP000001711">
    <property type="component" value="Genome"/>
</dbReference>
<dbReference type="GO" id="GO:0019042">
    <property type="term" value="P:viral latency"/>
    <property type="evidence" value="ECO:0007669"/>
    <property type="project" value="UniProtKB-KW"/>
</dbReference>
<dbReference type="InterPro" id="IPR013056">
    <property type="entry name" value="Phage_lambda_CIII"/>
</dbReference>
<dbReference type="Pfam" id="PF02061">
    <property type="entry name" value="Lambda_CIII"/>
    <property type="match status" value="1"/>
</dbReference>
<dbReference type="PRINTS" id="PR00936">
    <property type="entry name" value="BPLRPCIII"/>
</dbReference>
<dbReference type="PROSITE" id="PS00553">
    <property type="entry name" value="LAMBDA_PHAGE_CIII"/>
    <property type="match status" value="1"/>
</dbReference>
<organism>
    <name type="scientific">Escherichia phage lambda</name>
    <name type="common">Bacteriophage lambda</name>
    <dbReference type="NCBI Taxonomy" id="2681611"/>
    <lineage>
        <taxon>Viruses</taxon>
        <taxon>Duplodnaviria</taxon>
        <taxon>Heunggongvirae</taxon>
        <taxon>Uroviricota</taxon>
        <taxon>Caudoviricetes</taxon>
        <taxon>Lambdavirus</taxon>
        <taxon>Lambdavirus lambda</taxon>
    </lineage>
</organism>
<protein>
    <recommendedName>
        <fullName>Protease inhibitor III</fullName>
    </recommendedName>
</protein>
<organismHost>
    <name type="scientific">Escherichia coli</name>
    <dbReference type="NCBI Taxonomy" id="562"/>
</organismHost>
<accession>P03044</accession>
<reference key="1">
    <citation type="journal article" date="1982" name="J. Mol. Biol.">
        <title>Nucleotide sequence of bacteriophage lambda DNA.</title>
        <authorList>
            <person name="Sanger F."/>
            <person name="Coulson A.R."/>
            <person name="Hong G.F."/>
            <person name="Hill D.F."/>
            <person name="Petersen G.B."/>
        </authorList>
    </citation>
    <scope>NUCLEOTIDE SEQUENCE [LARGE SCALE GENOMIC DNA]</scope>
</reference>
<reference key="2">
    <citation type="journal article" date="1981" name="Nucleic Acids Res.">
        <title>The DNA sequence of the phage lambda genome between PL and the gene bet.</title>
        <authorList>
            <person name="Ineichen K."/>
            <person name="Shepherd J.C.W."/>
            <person name="Bickle T.A."/>
        </authorList>
    </citation>
    <scope>NUCLEOTIDE SEQUENCE [GENOMIC DNA]</scope>
</reference>
<reference key="3">
    <citation type="journal article" date="1987" name="Proc. Natl. Acad. Sci. U.S.A.">
        <title>RNase III stimulates the translation of the cIII gene of bacteriophage lambda.</title>
        <authorList>
            <person name="Altuvia S."/>
            <person name="Locker-Giladi H."/>
            <person name="Koby S."/>
            <person name="Ben-Nun O."/>
            <person name="Oppenheim A.B."/>
        </authorList>
    </citation>
    <scope>NUCLEOTIDE SEQUENCE [MRNA] OF 1-17</scope>
</reference>
<reference key="4">
    <citation type="journal article" date="1991" name="Proc. Natl. Acad. Sci. U.S.A.">
        <title>The activity of the CIII regulator of lambdoid bacteriophages resides within a 24-amino acid protein domain.</title>
        <authorList>
            <person name="Kornitzer D."/>
            <person name="Altuvia S."/>
            <person name="Oppenheim A.B."/>
        </authorList>
    </citation>
    <scope>MUTAGENESIS</scope>
</reference>
<reference key="5">
    <citation type="journal article" date="1997" name="J. Bacteriol.">
        <title>The HflB protease of Escherichia coli degrades its inhibitor lambda cIII.</title>
        <authorList>
            <person name="Herman C."/>
            <person name="Thevenet D."/>
            <person name="D'Ari R."/>
            <person name="Bouloc P."/>
        </authorList>
    </citation>
    <scope>FUNCTION</scope>
</reference>
<reference key="6">
    <citation type="journal article" date="2007" name="PLoS ONE">
        <title>Phage lambda CIII: a protease inhibitor regulating the lysis-lysogeny decision.</title>
        <authorList>
            <person name="Kobiler O."/>
            <person name="Rokney A."/>
            <person name="Oppenheim A.B."/>
        </authorList>
    </citation>
    <scope>FUNCTION</scope>
</reference>
<reference key="7">
    <citation type="journal article" date="2008" name="FEBS J.">
        <title>Direct CIII-HflB interaction is responsible for the inhibition of the HflB (FtsH)-mediated proteolysis of Escherichia coli sigma(32) by lambdaCIII.</title>
        <authorList>
            <person name="Halder S."/>
            <person name="Banerjee S."/>
            <person name="Parrack P."/>
        </authorList>
    </citation>
    <scope>FUNCTION</scope>
</reference>
<proteinExistence type="evidence at protein level"/>
<evidence type="ECO:0000269" key="1">
    <source>
    </source>
</evidence>
<evidence type="ECO:0000269" key="2">
    <source>
    </source>
</evidence>
<evidence type="ECO:0000269" key="3">
    <source>
    </source>
</evidence>
<evidence type="ECO:0000269" key="4">
    <source>
    </source>
</evidence>
<evidence type="ECO:0000305" key="5"/>
<feature type="chain" id="PRO_0000077595" description="Protease inhibitor III">
    <location>
        <begin position="1"/>
        <end position="54"/>
    </location>
</feature>
<feature type="mutagenesis site" description="Low cIII activity." evidence="2">
    <original>R</original>
    <variation>P</variation>
    <location>
        <position position="21"/>
    </location>
</feature>
<sequence length="54" mass="6047">MQYAIAGWPVAGCPSESLLERITRKLRDGWKRLIDILNQPGVPKNGSNTYGYPD</sequence>
<gene>
    <name type="primary">cIII</name>
    <name type="ordered locus">lambdap86</name>
</gene>
<name>RPC3_LAMBD</name>
<keyword id="KW-0010">Activator</keyword>
<keyword id="KW-1185">Reference proteome</keyword>
<keyword id="KW-1251">Viral latency</keyword>
<keyword id="KW-1276">Viral latency initiation and maintenance</keyword>
<comment type="function">
    <text evidence="1 3 4">Acts as a host protease inhibitor that allows the virus to initiate latency. Following infection, prevents protein cII degradation by inhibiting host protease FtsH (cII is a factor that initiates the expression of repressor cI, the major component promoting latency). Functions as a competitive inhibitor (and thus as alternative substrate) of host FtsH and thereby prevents binding of cII substrate. In turn, stabilization of cII transcriptional activator allows protein cI expression and thus initiation of latency.</text>
</comment>
<comment type="similarity">
    <text evidence="5">Belongs to the lambda phage cIII protein family.</text>
</comment>
<comment type="caution">
    <text evidence="5">PubMed:6458018 assigned the gene cIII product to the sequence of the kil gene protein.</text>
</comment>